<accession>Q6GQG3</accession>
<accession>Q7ZXC1</accession>
<organism>
    <name type="scientific">Xenopus laevis</name>
    <name type="common">African clawed frog</name>
    <dbReference type="NCBI Taxonomy" id="8355"/>
    <lineage>
        <taxon>Eukaryota</taxon>
        <taxon>Metazoa</taxon>
        <taxon>Chordata</taxon>
        <taxon>Craniata</taxon>
        <taxon>Vertebrata</taxon>
        <taxon>Euteleostomi</taxon>
        <taxon>Amphibia</taxon>
        <taxon>Batrachia</taxon>
        <taxon>Anura</taxon>
        <taxon>Pipoidea</taxon>
        <taxon>Pipidae</taxon>
        <taxon>Xenopodinae</taxon>
        <taxon>Xenopus</taxon>
        <taxon>Xenopus</taxon>
    </lineage>
</organism>
<dbReference type="EMBL" id="BC045060">
    <property type="protein sequence ID" value="AAH45060.1"/>
    <property type="status" value="ALT_INIT"/>
    <property type="molecule type" value="mRNA"/>
</dbReference>
<dbReference type="EMBL" id="BC072781">
    <property type="protein sequence ID" value="AAH72781.1"/>
    <property type="molecule type" value="mRNA"/>
</dbReference>
<dbReference type="SMR" id="Q6GQG3"/>
<dbReference type="BioGRID" id="100425">
    <property type="interactions" value="1"/>
</dbReference>
<dbReference type="iPTMnet" id="Q6GQG3"/>
<dbReference type="DNASU" id="399099"/>
<dbReference type="GeneID" id="399099"/>
<dbReference type="KEGG" id="xla:399099"/>
<dbReference type="AGR" id="Xenbase:XB-GENE-17336028"/>
<dbReference type="CTD" id="399099"/>
<dbReference type="Xenbase" id="XB-GENE-17336028">
    <property type="gene designation" value="arpp19.S"/>
</dbReference>
<dbReference type="OMA" id="YLYCSII"/>
<dbReference type="OrthoDB" id="5949865at2759"/>
<dbReference type="Proteomes" id="UP000186698">
    <property type="component" value="Chromosome 3S"/>
</dbReference>
<dbReference type="Bgee" id="399099">
    <property type="expression patterns" value="Expressed in gastrula and 19 other cell types or tissues"/>
</dbReference>
<dbReference type="GO" id="GO:0005737">
    <property type="term" value="C:cytoplasm"/>
    <property type="evidence" value="ECO:0007669"/>
    <property type="project" value="UniProtKB-SubCell"/>
</dbReference>
<dbReference type="GO" id="GO:0019212">
    <property type="term" value="F:phosphatase inhibitor activity"/>
    <property type="evidence" value="ECO:0000250"/>
    <property type="project" value="UniProtKB"/>
</dbReference>
<dbReference type="GO" id="GO:0051721">
    <property type="term" value="F:protein phosphatase 2A binding"/>
    <property type="evidence" value="ECO:0000250"/>
    <property type="project" value="UniProtKB"/>
</dbReference>
<dbReference type="GO" id="GO:0004864">
    <property type="term" value="F:protein phosphatase inhibitor activity"/>
    <property type="evidence" value="ECO:0007669"/>
    <property type="project" value="UniProtKB-KW"/>
</dbReference>
<dbReference type="GO" id="GO:0019888">
    <property type="term" value="F:protein phosphatase regulator activity"/>
    <property type="evidence" value="ECO:0000250"/>
    <property type="project" value="UniProtKB"/>
</dbReference>
<dbReference type="GO" id="GO:0051301">
    <property type="term" value="P:cell division"/>
    <property type="evidence" value="ECO:0007669"/>
    <property type="project" value="UniProtKB-KW"/>
</dbReference>
<dbReference type="GO" id="GO:0000086">
    <property type="term" value="P:G2/M transition of mitotic cell cycle"/>
    <property type="evidence" value="ECO:0000250"/>
    <property type="project" value="UniProtKB"/>
</dbReference>
<dbReference type="GO" id="GO:0000278">
    <property type="term" value="P:mitotic cell cycle"/>
    <property type="evidence" value="ECO:0000250"/>
    <property type="project" value="UniProtKB"/>
</dbReference>
<dbReference type="InterPro" id="IPR006760">
    <property type="entry name" value="Endosulphine"/>
</dbReference>
<dbReference type="PANTHER" id="PTHR10358:SF4">
    <property type="entry name" value="CAMP-REGULATED PHOSPHOPROTEIN 19"/>
    <property type="match status" value="1"/>
</dbReference>
<dbReference type="PANTHER" id="PTHR10358">
    <property type="entry name" value="ENDOSULFINE"/>
    <property type="match status" value="1"/>
</dbReference>
<dbReference type="Pfam" id="PF04667">
    <property type="entry name" value="Endosulfine"/>
    <property type="match status" value="1"/>
</dbReference>
<proteinExistence type="inferred from homology"/>
<keyword id="KW-0131">Cell cycle</keyword>
<keyword id="KW-0132">Cell division</keyword>
<keyword id="KW-0963">Cytoplasm</keyword>
<keyword id="KW-0498">Mitosis</keyword>
<keyword id="KW-0597">Phosphoprotein</keyword>
<keyword id="KW-0650">Protein phosphatase inhibitor</keyword>
<keyword id="KW-1185">Reference proteome</keyword>
<protein>
    <recommendedName>
        <fullName>cAMP-regulated phosphoprotein 19-B</fullName>
        <shortName>ARPP-19-B</shortName>
    </recommendedName>
</protein>
<evidence type="ECO:0000250" key="1"/>
<evidence type="ECO:0000256" key="2">
    <source>
        <dbReference type="SAM" id="MobiDB-lite"/>
    </source>
</evidence>
<evidence type="ECO:0000305" key="3"/>
<gene>
    <name type="primary">arpp19-b</name>
</gene>
<sequence>MSRDNQEIKAPEESSAEEQKEMDDKVTSPEKAEEIKLKSRYPNIGPKPGGSDFLRKRLQKGQKYFDSGDYNMAKAKMKNKQLPTAAPDKTEVTGDHIPTPQDLPQRKPSLVASKLAG</sequence>
<comment type="function">
    <text evidence="1">Protein phosphatase inhibitor that specifically inhibits protein phosphatase 2A (PP2A) during mitosis. When phosphorylated at Ser-67 during mitosis, specifically interacts with ppp2r2d (PR55-delta) and inhibits its activity, leading to inactivation of PP2A, an essential condition to keep cyclin-B1-CDK1 activity high during M phase (By similarity).</text>
</comment>
<comment type="subunit">
    <text evidence="1">Interacts (when phosphorylated at Ser-67) with ppp2r2d.</text>
</comment>
<comment type="subcellular location">
    <subcellularLocation>
        <location evidence="1">Cytoplasm</location>
    </subcellularLocation>
</comment>
<comment type="PTM">
    <text evidence="1">Phosphorylation at Ser-67 by gwl during mitosis is essential for interaction with ppp2r2d (PR55-delta) and subsequent inactivation of PP2A.</text>
</comment>
<comment type="similarity">
    <text evidence="3">Belongs to the endosulfine family.</text>
</comment>
<comment type="sequence caution" evidence="3">
    <conflict type="erroneous initiation">
        <sequence resource="EMBL-CDS" id="AAH45060"/>
    </conflict>
    <text>Extended N-terminus.</text>
</comment>
<reference key="1">
    <citation type="submission" date="2004-06" db="EMBL/GenBank/DDBJ databases">
        <authorList>
            <consortium name="NIH - Xenopus Gene Collection (XGC) project"/>
        </authorList>
    </citation>
    <scope>NUCLEOTIDE SEQUENCE [LARGE SCALE MRNA]</scope>
    <source>
        <tissue>Embryo</tissue>
    </source>
</reference>
<name>AR19B_XENLA</name>
<feature type="chain" id="PRO_0000408322" description="cAMP-regulated phosphoprotein 19-B">
    <location>
        <begin position="1"/>
        <end position="117"/>
    </location>
</feature>
<feature type="region of interest" description="Disordered" evidence="2">
    <location>
        <begin position="1"/>
        <end position="54"/>
    </location>
</feature>
<feature type="region of interest" description="Disordered" evidence="2">
    <location>
        <begin position="77"/>
        <end position="117"/>
    </location>
</feature>
<feature type="compositionally biased region" description="Basic and acidic residues" evidence="2">
    <location>
        <begin position="1"/>
        <end position="37"/>
    </location>
</feature>
<feature type="modified residue" description="Phosphoserine; by CDK2" evidence="1">
    <location>
        <position position="28"/>
    </location>
</feature>
<feature type="modified residue" description="Phosphoserine; by GWL" evidence="1">
    <location>
        <position position="67"/>
    </location>
</feature>
<feature type="modified residue" description="Phosphothreonine; by CDK2" evidence="1">
    <location>
        <position position="99"/>
    </location>
</feature>
<feature type="modified residue" description="Phosphoserine; by PKA" evidence="1">
    <location>
        <position position="109"/>
    </location>
</feature>
<feature type="sequence conflict" description="In Ref. 1; AAH45060." evidence="3" ref="1">
    <original>S</original>
    <variation>T</variation>
    <location>
        <position position="39"/>
    </location>
</feature>